<proteinExistence type="evidence at protein level"/>
<evidence type="ECO:0000255" key="1"/>
<evidence type="ECO:0000255" key="2">
    <source>
        <dbReference type="PROSITE-ProRule" id="PRU00219"/>
    </source>
</evidence>
<evidence type="ECO:0000269" key="3">
    <source>
    </source>
</evidence>
<evidence type="ECO:0000269" key="4">
    <source>
    </source>
</evidence>
<evidence type="ECO:0000269" key="5">
    <source>
    </source>
</evidence>
<evidence type="ECO:0000269" key="6">
    <source>
    </source>
</evidence>
<evidence type="ECO:0000269" key="7">
    <source>
    </source>
</evidence>
<evidence type="ECO:0000305" key="8"/>
<feature type="signal peptide" evidence="1">
    <location>
        <begin position="1"/>
        <end position="19"/>
    </location>
</feature>
<feature type="chain" id="PRO_0000022627" description="Voltage-dependent calcium channel unc-36">
    <location>
        <begin position="20"/>
        <end position="1249"/>
    </location>
</feature>
<feature type="topological domain" description="Extracellular" evidence="1">
    <location>
        <begin position="20"/>
        <end position="1228"/>
    </location>
</feature>
<feature type="transmembrane region" description="Helical" evidence="1">
    <location>
        <begin position="1229"/>
        <end position="1248"/>
    </location>
</feature>
<feature type="topological domain" description="Cytoplasmic" evidence="1">
    <location>
        <position position="1249"/>
    </location>
</feature>
<feature type="domain" description="VWFA" evidence="2">
    <location>
        <begin position="250"/>
        <end position="479"/>
    </location>
</feature>
<feature type="glycosylation site" description="N-linked (GlcNAc...) asparagine" evidence="5">
    <location>
        <position position="100"/>
    </location>
</feature>
<feature type="glycosylation site" description="N-linked (GlcNAc...) asparagine" evidence="1">
    <location>
        <position position="140"/>
    </location>
</feature>
<feature type="glycosylation site" description="N-linked (GlcNAc...) asparagine" evidence="1">
    <location>
        <position position="146"/>
    </location>
</feature>
<feature type="glycosylation site" description="N-linked (GlcNAc...) asparagine" evidence="1">
    <location>
        <position position="302"/>
    </location>
</feature>
<feature type="glycosylation site" description="N-linked (GlcNAc...) asparagine" evidence="1">
    <location>
        <position position="520"/>
    </location>
</feature>
<feature type="glycosylation site" description="N-linked (GlcNAc...) asparagine" evidence="1">
    <location>
        <position position="558"/>
    </location>
</feature>
<feature type="glycosylation site" description="N-linked (GlcNAc...) asparagine" evidence="5">
    <location>
        <position position="757"/>
    </location>
</feature>
<feature type="glycosylation site" description="N-linked (GlcNAc...) asparagine" evidence="1">
    <location>
        <position position="838"/>
    </location>
</feature>
<feature type="glycosylation site" description="N-linked (GlcNAc...) asparagine" evidence="1">
    <location>
        <position position="903"/>
    </location>
</feature>
<feature type="glycosylation site" description="N-linked (GlcNAc...) asparagine" evidence="1">
    <location>
        <position position="923"/>
    </location>
</feature>
<feature type="glycosylation site" description="N-linked (GlcNAc...) asparagine" evidence="1">
    <location>
        <position position="1130"/>
    </location>
</feature>
<feature type="splice variant" id="VSP_036007" description="In isoform b." evidence="8">
    <location>
        <begin position="1"/>
        <end position="1145"/>
    </location>
</feature>
<reference key="1">
    <citation type="journal article" date="1994" name="Nature">
        <title>2.2 Mb of contiguous nucleotide sequence from chromosome III of C. elegans.</title>
        <authorList>
            <person name="Wilson R."/>
            <person name="Ainscough R."/>
            <person name="Anderson K."/>
            <person name="Baynes C."/>
            <person name="Berks M."/>
            <person name="Bonfield J."/>
            <person name="Burton J."/>
            <person name="Connell M."/>
            <person name="Copsey T."/>
            <person name="Cooper J."/>
            <person name="Coulson A."/>
            <person name="Craxton M."/>
            <person name="Dear S."/>
            <person name="Du Z."/>
            <person name="Durbin R."/>
            <person name="Favello A."/>
            <person name="Fraser A."/>
            <person name="Fulton L."/>
            <person name="Gardner A."/>
            <person name="Green P."/>
            <person name="Hawkins T."/>
            <person name="Hillier L."/>
            <person name="Jier M."/>
            <person name="Johnston L."/>
            <person name="Jones M."/>
            <person name="Kershaw J."/>
            <person name="Kirsten J."/>
            <person name="Laisster N."/>
            <person name="Latreille P."/>
            <person name="Lightning J."/>
            <person name="Lloyd C."/>
            <person name="Mortimore B."/>
            <person name="O'Callaghan M."/>
            <person name="Parsons J."/>
            <person name="Percy C."/>
            <person name="Rifken L."/>
            <person name="Roopra A."/>
            <person name="Saunders D."/>
            <person name="Shownkeen R."/>
            <person name="Sims M."/>
            <person name="Smaldon N."/>
            <person name="Smith A."/>
            <person name="Smith M."/>
            <person name="Sonnhammer E."/>
            <person name="Staden R."/>
            <person name="Sulston J."/>
            <person name="Thierry-Mieg J."/>
            <person name="Thomas K."/>
            <person name="Vaudin M."/>
            <person name="Vaughan K."/>
            <person name="Waterston R."/>
            <person name="Watson A."/>
            <person name="Weinstock L."/>
            <person name="Wilkinson-Sproat J."/>
            <person name="Wohldman P."/>
        </authorList>
    </citation>
    <scope>NUCLEOTIDE SEQUENCE [LARGE SCALE GENOMIC DNA]</scope>
    <scope>ALTERNATIVE SPLICING</scope>
    <source>
        <strain>Bristol N2</strain>
    </source>
</reference>
<reference key="2">
    <citation type="journal article" date="1998" name="Science">
        <title>Genome sequence of the nematode C. elegans: a platform for investigating biology.</title>
        <authorList>
            <consortium name="The C. elegans sequencing consortium"/>
        </authorList>
    </citation>
    <scope>NUCLEOTIDE SEQUENCE [LARGE SCALE GENOMIC DNA]</scope>
    <scope>ALTERNATIVE SPLICING</scope>
    <source>
        <strain>Bristol N2</strain>
    </source>
</reference>
<reference key="3">
    <citation type="journal article" date="1993" name="Genetics">
        <title>The genetics of feeding in Caenorhabditis elegans.</title>
        <authorList>
            <person name="Avery L."/>
        </authorList>
    </citation>
    <scope>FUNCTION</scope>
</reference>
<reference key="4">
    <citation type="journal article" date="1996" name="Genetics">
        <title>Genes affecting sensitivity to serotonin in Caenorhabditis elegans.</title>
        <authorList>
            <person name="Schafer W.R."/>
            <person name="Sanchez B.M."/>
            <person name="Kenyon C.J."/>
        </authorList>
    </citation>
    <scope>FUNCTION</scope>
    <scope>TISSUE SPECIFICITY</scope>
</reference>
<reference key="5">
    <citation type="journal article" date="1999" name="Cell">
        <title>Lateral signaling mediated by axon contact and calcium entry regulates asymmetric odorant receptor expression in C. elegans.</title>
        <authorList>
            <person name="Troemel E.R."/>
            <person name="Sagasti A."/>
            <person name="Bargmann C.I."/>
        </authorList>
    </citation>
    <scope>FUNCTION</scope>
</reference>
<reference key="6">
    <citation type="journal article" date="2006" name="J. Neurobiol.">
        <title>Effects of voltage-gated calcium channel subunit genes on calcium influx in cultured C. elegans mechanosensory neurons.</title>
        <authorList>
            <person name="Frokjaer-Jensen C."/>
            <person name="Kindt K.S."/>
            <person name="Kerr R.A."/>
            <person name="Suzuki H."/>
            <person name="Melnik-Martinez K."/>
            <person name="Gerstbreih B."/>
            <person name="Driscol M."/>
            <person name="Schafer W.R."/>
        </authorList>
    </citation>
    <scope>FUNCTION</scope>
    <scope>TISSUE SPECIFICITY</scope>
    <scope>DISRUPTION PHENOTYPE</scope>
</reference>
<reference key="7">
    <citation type="journal article" date="2007" name="Mol. Cell. Proteomics">
        <title>Proteomics reveals N-linked glycoprotein diversity in Caenorhabditis elegans and suggests an atypical translocation mechanism for integral membrane proteins.</title>
        <authorList>
            <person name="Kaji H."/>
            <person name="Kamiie J."/>
            <person name="Kawakami H."/>
            <person name="Kido K."/>
            <person name="Yamauchi Y."/>
            <person name="Shinkawa T."/>
            <person name="Taoka M."/>
            <person name="Takahashi N."/>
            <person name="Isobe T."/>
        </authorList>
    </citation>
    <scope>GLYCOSYLATION [LARGE SCALE ANALYSIS] AT ASN-100 AND ASN-757</scope>
    <scope>IDENTIFICATION BY MASS SPECTROMETRY</scope>
    <source>
        <strain>Bristol N2</strain>
    </source>
</reference>
<comment type="function">
    <text evidence="3 4 6 7">May act as an auxiliary subunit of the unc-2 voltage-gated calcium channel which appears to trigger calcium-activated signaling pathways that control the serotonin response. Inhibiting serotonin sensitivity of the vulval muscles results in egg laying defects. May act in both neurons and muscle cells to enhance motor activity as it is required for coordinated movement. Has a role in neural depolarization-induced calcium influx and pharyngeal pumping (PubMed:16838374, PubMed:8462849, PubMed:8807295). Involved in restricting the expression of the putative olfactory receptor str-2 to only one of the two AWC neurons (PubMed:10571181).</text>
</comment>
<comment type="subcellular location">
    <subcellularLocation>
        <location evidence="8">Membrane</location>
        <topology evidence="8">Single-pass type I membrane protein</topology>
    </subcellularLocation>
</comment>
<comment type="alternative products">
    <event type="alternative splicing"/>
    <isoform>
        <id>P34374-1</id>
        <name>a</name>
        <sequence type="displayed"/>
    </isoform>
    <isoform>
        <id>P34374-2</id>
        <name>b</name>
        <sequence type="described" ref="VSP_036007"/>
    </isoform>
</comment>
<comment type="tissue specificity">
    <text evidence="4 7">Decendants of the cells AB and AB.p (that give rise to nearly all non-pharyngeal neurons), decendants of P1 (that give rise to body muscle) and cell lineages that give rise to the adult and juvenile motor neurons. Expressed in body wall, vulval muscle and pharyngeal muscle.</text>
</comment>
<comment type="disruption phenotype">
    <text evidence="4">Worms exhibit a weak egg-laying constitutive (Egl-c) phenotype and slow irregular pharyngeal pumping.</text>
</comment>
<sequence>MRVVHLLVVLATYVSTTSSFNKESIKECAKVLSEHMKETFSKISHETILKQNYEKLVEEEQFDPRAELKKSKHRIEDYLKVRSQFAYKAKISLEARSVRNDSTVNDPQSKSFIRFMSAKQGNDGTTIYESNHLGKRLKVNETKSFNLTQNANFYTLPTSSVSSAVHIPTPLYDRNEDLLRKIDWSDIDAVYRTNREETKDLAFQLFCSEAGYMRYYPAASWFWDNQDEHLDLFDCRNTEWYINSATNSKNVLIMLDMSGSMLGQRYEVAKQTTEAILETLSHNDYFNIMTFSKNTFLLDGCNGTNGLLQATMRNKKALRRKMDTYQSEGKAEYEKALPLAFSVLLDLKGSYALYTKEEMSMMSANATNEYQFHLELPEHVLAATKQYIDSINNGGGDNNRGACENVIMLITDGAPNAYKKIFDMYNADKKVRVFTFLVGDEAIDFNEVREMACNNRGYMVHVANMADVDEKIHHYIRRMSRVVGRHYKESGQLSWWTGVYRERLYLPRPEIFAEPVPITNQSFAVMNKMASRRKIRLQKSEARSRMFVTTVSYPVIVNETFMGVAAVNIPLTEVAQKSHPANIGSKSYFFMLDQNGFVMTHPQLRPIDPFTKYHKQNYNNMDLLELEVGQNQNVRSSQKSQAVSDLVCESGANYAECVDDLRKAVRKMIIDCDNSDVQQLDVLYATELLDRVYPQTNTYYAECINHANFVLGLAVAKGDDYRVVKKQKKYDFGRVKMDWMGDKRWRLHPHWRYCFLNDTDTHMSKEEAFEIYAQQMSDSGKAPLLCEYRRNLVEKLLLDMEATSNLIDSWDTQFNFMKNNLIHLAFFATPSGMIRYYNLTLQDYDYIDPYWSIFEHIGHLLSIEHAQESYNHFITDLNRKSTDDRYYRRAVRMKDTIMFDVSNNSKIWYKSETQLTGYGLNENLTMLGQAFKAIYLDKAVLGVSGFEFAYDHVVDTMAEHGCPASDDRKWCVLLDEHAYVFFSNQNDISYEDYLVGKGKHISQYFGGLNRIAQRAMALLVENKFYTKLTYTDNQAVCKAEKVVTTSGNRLRPFYPIFRFLMQTFNFMVRLASQISGGFLIWLPNIQFTEAYTASFHEGTDVYPCPKQSSFYFSNKDGKNRPGTTHLVNGNRSERPCKMNAKCSVKMEASFVDGTNLVMVWITQDKASENCYDESECSMEISNQVPFGFEEVKNEETCEENEKRKSKANDVCYSIDDDDSENERRPCSTSPTIVSIFQILFGVFLHFCIF</sequence>
<accession>P34374</accession>
<accession>A9Z1J5</accession>
<accession>P34372</accession>
<accession>P34373</accession>
<gene>
    <name type="primary">unc-36</name>
    <name type="synonym">unc-72</name>
    <name type="ORF">C50C3.9/C50C3.10/C50C3.11</name>
</gene>
<organism>
    <name type="scientific">Caenorhabditis elegans</name>
    <dbReference type="NCBI Taxonomy" id="6239"/>
    <lineage>
        <taxon>Eukaryota</taxon>
        <taxon>Metazoa</taxon>
        <taxon>Ecdysozoa</taxon>
        <taxon>Nematoda</taxon>
        <taxon>Chromadorea</taxon>
        <taxon>Rhabditida</taxon>
        <taxon>Rhabditina</taxon>
        <taxon>Rhabditomorpha</taxon>
        <taxon>Rhabditoidea</taxon>
        <taxon>Rhabditidae</taxon>
        <taxon>Peloderinae</taxon>
        <taxon>Caenorhabditis</taxon>
    </lineage>
</organism>
<protein>
    <recommendedName>
        <fullName>Voltage-dependent calcium channel unc-36</fullName>
    </recommendedName>
    <alternativeName>
        <fullName>Pharyngeal calcium channel subunit alpha-2</fullName>
    </alternativeName>
    <alternativeName>
        <fullName>Uncoordinated protein 36</fullName>
    </alternativeName>
</protein>
<name>UNC36_CAEEL</name>
<keyword id="KW-0025">Alternative splicing</keyword>
<keyword id="KW-0106">Calcium</keyword>
<keyword id="KW-0107">Calcium channel</keyword>
<keyword id="KW-0109">Calcium transport</keyword>
<keyword id="KW-0325">Glycoprotein</keyword>
<keyword id="KW-0407">Ion channel</keyword>
<keyword id="KW-0406">Ion transport</keyword>
<keyword id="KW-0472">Membrane</keyword>
<keyword id="KW-1185">Reference proteome</keyword>
<keyword id="KW-0732">Signal</keyword>
<keyword id="KW-0812">Transmembrane</keyword>
<keyword id="KW-1133">Transmembrane helix</keyword>
<keyword id="KW-0813">Transport</keyword>
<keyword id="KW-0851">Voltage-gated channel</keyword>
<dbReference type="EMBL" id="FO080718">
    <property type="protein sequence ID" value="CCD66125.1"/>
    <property type="molecule type" value="Genomic_DNA"/>
</dbReference>
<dbReference type="EMBL" id="FO080718">
    <property type="protein sequence ID" value="CCD66126.1"/>
    <property type="molecule type" value="Genomic_DNA"/>
</dbReference>
<dbReference type="PIR" id="S44617">
    <property type="entry name" value="S44617"/>
</dbReference>
<dbReference type="PIR" id="S44618">
    <property type="entry name" value="S44618"/>
</dbReference>
<dbReference type="PIR" id="S44619">
    <property type="entry name" value="S44619"/>
</dbReference>
<dbReference type="RefSeq" id="NP_001040851.1">
    <molecule id="P34374-1"/>
    <property type="nucleotide sequence ID" value="NM_001047386.6"/>
</dbReference>
<dbReference type="RefSeq" id="NP_001040852.1">
    <molecule id="P34374-2"/>
    <property type="nucleotide sequence ID" value="NM_001047387.4"/>
</dbReference>
<dbReference type="SMR" id="P34374"/>
<dbReference type="BioGRID" id="41360">
    <property type="interactions" value="1"/>
</dbReference>
<dbReference type="FunCoup" id="P34374">
    <property type="interactions" value="946"/>
</dbReference>
<dbReference type="STRING" id="6239.C50C3.9a.1"/>
<dbReference type="GlyCosmos" id="P34374">
    <property type="glycosylation" value="11 sites, No reported glycans"/>
</dbReference>
<dbReference type="iPTMnet" id="P34374"/>
<dbReference type="PaxDb" id="6239-C50C3.9a"/>
<dbReference type="EnsemblMetazoa" id="C50C3.9a.1">
    <molecule id="P34374-1"/>
    <property type="protein sequence ID" value="C50C3.9a.1"/>
    <property type="gene ID" value="WBGene00006772"/>
</dbReference>
<dbReference type="EnsemblMetazoa" id="C50C3.9b.1">
    <molecule id="P34374-2"/>
    <property type="protein sequence ID" value="C50C3.9b.1"/>
    <property type="gene ID" value="WBGene00006772"/>
</dbReference>
<dbReference type="GeneID" id="176155"/>
<dbReference type="KEGG" id="cel:CELE_C50C3.9"/>
<dbReference type="UCSC" id="C50C3.9a">
    <property type="organism name" value="c. elegans"/>
</dbReference>
<dbReference type="AGR" id="WB:WBGene00006772"/>
<dbReference type="CTD" id="176155"/>
<dbReference type="WormBase" id="C50C3.9a">
    <property type="protein sequence ID" value="CE32168"/>
    <property type="gene ID" value="WBGene00006772"/>
    <property type="gene designation" value="unc-36"/>
</dbReference>
<dbReference type="WormBase" id="C50C3.9b">
    <property type="protein sequence ID" value="CE39702"/>
    <property type="gene ID" value="WBGene00006772"/>
    <property type="gene designation" value="unc-36"/>
</dbReference>
<dbReference type="eggNOG" id="KOG2353">
    <property type="taxonomic scope" value="Eukaryota"/>
</dbReference>
<dbReference type="GeneTree" id="ENSGT00940000166626"/>
<dbReference type="InParanoid" id="P34374"/>
<dbReference type="OMA" id="KIWYKSE"/>
<dbReference type="OrthoDB" id="10054666at2759"/>
<dbReference type="PhylomeDB" id="P34374"/>
<dbReference type="Reactome" id="R-CEL-112308">
    <property type="pathway name" value="Presynaptic depolarization and calcium channel opening"/>
</dbReference>
<dbReference type="Reactome" id="R-CEL-422356">
    <property type="pathway name" value="Regulation of insulin secretion"/>
</dbReference>
<dbReference type="Reactome" id="R-CEL-5576892">
    <property type="pathway name" value="Phase 0 - rapid depolarisation"/>
</dbReference>
<dbReference type="Reactome" id="R-CEL-5576893">
    <property type="pathway name" value="Phase 2 - plateau phase"/>
</dbReference>
<dbReference type="PRO" id="PR:P34374"/>
<dbReference type="Proteomes" id="UP000001940">
    <property type="component" value="Chromosome III"/>
</dbReference>
<dbReference type="Bgee" id="WBGene00006772">
    <property type="expression patterns" value="Expressed in pharyngeal muscle cell (C elegans) and 3 other cell types or tissues"/>
</dbReference>
<dbReference type="ExpressionAtlas" id="P34374">
    <property type="expression patterns" value="baseline and differential"/>
</dbReference>
<dbReference type="GO" id="GO:0005789">
    <property type="term" value="C:endoplasmic reticulum membrane"/>
    <property type="evidence" value="ECO:0000314"/>
    <property type="project" value="WormBase"/>
</dbReference>
<dbReference type="GO" id="GO:0005886">
    <property type="term" value="C:plasma membrane"/>
    <property type="evidence" value="ECO:0000314"/>
    <property type="project" value="WormBase"/>
</dbReference>
<dbReference type="GO" id="GO:0005891">
    <property type="term" value="C:voltage-gated calcium channel complex"/>
    <property type="evidence" value="ECO:0000314"/>
    <property type="project" value="UniProtKB"/>
</dbReference>
<dbReference type="GO" id="GO:0005246">
    <property type="term" value="F:calcium channel regulator activity"/>
    <property type="evidence" value="ECO:0000315"/>
    <property type="project" value="WormBase"/>
</dbReference>
<dbReference type="GO" id="GO:0005251">
    <property type="term" value="F:delayed rectifier potassium channel activity"/>
    <property type="evidence" value="ECO:0000314"/>
    <property type="project" value="WormBase"/>
</dbReference>
<dbReference type="GO" id="GO:0005245">
    <property type="term" value="F:voltage-gated calcium channel activity"/>
    <property type="evidence" value="ECO:0000314"/>
    <property type="project" value="UniProtKB"/>
</dbReference>
<dbReference type="GO" id="GO:0018991">
    <property type="term" value="P:egg-laying behavior"/>
    <property type="evidence" value="ECO:0000315"/>
    <property type="project" value="UniProtKB"/>
</dbReference>
<dbReference type="GO" id="GO:0040011">
    <property type="term" value="P:locomotion"/>
    <property type="evidence" value="ECO:0000315"/>
    <property type="project" value="UniProtKB"/>
</dbReference>
<dbReference type="GO" id="GO:0043050">
    <property type="term" value="P:nematode pharyngeal pumping"/>
    <property type="evidence" value="ECO:0000315"/>
    <property type="project" value="UniProtKB"/>
</dbReference>
<dbReference type="GO" id="GO:0040017">
    <property type="term" value="P:positive regulation of locomotion"/>
    <property type="evidence" value="ECO:0000315"/>
    <property type="project" value="WormBase"/>
</dbReference>
<dbReference type="GO" id="GO:0035418">
    <property type="term" value="P:protein localization to synapse"/>
    <property type="evidence" value="ECO:0000315"/>
    <property type="project" value="WormBase"/>
</dbReference>
<dbReference type="GO" id="GO:0051924">
    <property type="term" value="P:regulation of calcium ion transport"/>
    <property type="evidence" value="ECO:0000315"/>
    <property type="project" value="WormBase"/>
</dbReference>
<dbReference type="GO" id="GO:0007210">
    <property type="term" value="P:serotonin receptor signaling pathway"/>
    <property type="evidence" value="ECO:0000315"/>
    <property type="project" value="UniProtKB"/>
</dbReference>
<dbReference type="CDD" id="cd01463">
    <property type="entry name" value="vWA_VGCC_like"/>
    <property type="match status" value="1"/>
</dbReference>
<dbReference type="FunFam" id="3.30.450.20:FF:000202">
    <property type="entry name" value="Voltage-dependent calcium channel unc-36"/>
    <property type="match status" value="1"/>
</dbReference>
<dbReference type="Gene3D" id="3.30.450.20">
    <property type="entry name" value="PAS domain"/>
    <property type="match status" value="1"/>
</dbReference>
<dbReference type="Gene3D" id="3.40.50.410">
    <property type="entry name" value="von Willebrand factor, type A domain"/>
    <property type="match status" value="1"/>
</dbReference>
<dbReference type="InterPro" id="IPR051173">
    <property type="entry name" value="Ca_channel_alpha-2/delta"/>
</dbReference>
<dbReference type="InterPro" id="IPR013608">
    <property type="entry name" value="VWA_N"/>
</dbReference>
<dbReference type="InterPro" id="IPR002035">
    <property type="entry name" value="VWF_A"/>
</dbReference>
<dbReference type="InterPro" id="IPR036465">
    <property type="entry name" value="vWFA_dom_sf"/>
</dbReference>
<dbReference type="PANTHER" id="PTHR10166:SF37">
    <property type="entry name" value="STOLID, ISOFORM H"/>
    <property type="match status" value="1"/>
</dbReference>
<dbReference type="PANTHER" id="PTHR10166">
    <property type="entry name" value="VOLTAGE-DEPENDENT CALCIUM CHANNEL SUBUNIT ALPHA-2/DELTA-RELATED"/>
    <property type="match status" value="1"/>
</dbReference>
<dbReference type="Pfam" id="PF13519">
    <property type="entry name" value="VWA_2"/>
    <property type="match status" value="1"/>
</dbReference>
<dbReference type="Pfam" id="PF08399">
    <property type="entry name" value="VWA_N"/>
    <property type="match status" value="1"/>
</dbReference>
<dbReference type="SMART" id="SM00327">
    <property type="entry name" value="VWA"/>
    <property type="match status" value="1"/>
</dbReference>
<dbReference type="SUPFAM" id="SSF53300">
    <property type="entry name" value="vWA-like"/>
    <property type="match status" value="1"/>
</dbReference>
<dbReference type="PROSITE" id="PS50234">
    <property type="entry name" value="VWFA"/>
    <property type="match status" value="1"/>
</dbReference>